<gene>
    <name evidence="1" type="primary">rpmE2</name>
    <name type="ordered locus">BT_1692</name>
</gene>
<dbReference type="EMBL" id="AE015928">
    <property type="protein sequence ID" value="AAO76799.1"/>
    <property type="molecule type" value="Genomic_DNA"/>
</dbReference>
<dbReference type="RefSeq" id="NP_810605.1">
    <property type="nucleotide sequence ID" value="NC_004663.1"/>
</dbReference>
<dbReference type="RefSeq" id="WP_005678397.1">
    <property type="nucleotide sequence ID" value="NZ_UYXG01000032.1"/>
</dbReference>
<dbReference type="SMR" id="Q8A733"/>
<dbReference type="FunCoup" id="Q8A733">
    <property type="interactions" value="73"/>
</dbReference>
<dbReference type="STRING" id="226186.BT_1692"/>
<dbReference type="PaxDb" id="226186-BT_1692"/>
<dbReference type="EnsemblBacteria" id="AAO76799">
    <property type="protein sequence ID" value="AAO76799"/>
    <property type="gene ID" value="BT_1692"/>
</dbReference>
<dbReference type="KEGG" id="bth:BT_1692"/>
<dbReference type="PATRIC" id="fig|226186.12.peg.1735"/>
<dbReference type="eggNOG" id="COG0254">
    <property type="taxonomic scope" value="Bacteria"/>
</dbReference>
<dbReference type="HOGENOM" id="CLU_114306_2_2_10"/>
<dbReference type="InParanoid" id="Q8A733"/>
<dbReference type="OrthoDB" id="9803251at2"/>
<dbReference type="Proteomes" id="UP000001414">
    <property type="component" value="Chromosome"/>
</dbReference>
<dbReference type="GO" id="GO:1990904">
    <property type="term" value="C:ribonucleoprotein complex"/>
    <property type="evidence" value="ECO:0007669"/>
    <property type="project" value="UniProtKB-KW"/>
</dbReference>
<dbReference type="GO" id="GO:0005840">
    <property type="term" value="C:ribosome"/>
    <property type="evidence" value="ECO:0007669"/>
    <property type="project" value="UniProtKB-KW"/>
</dbReference>
<dbReference type="GO" id="GO:0003735">
    <property type="term" value="F:structural constituent of ribosome"/>
    <property type="evidence" value="ECO:0007669"/>
    <property type="project" value="InterPro"/>
</dbReference>
<dbReference type="GO" id="GO:0006412">
    <property type="term" value="P:translation"/>
    <property type="evidence" value="ECO:0007669"/>
    <property type="project" value="UniProtKB-UniRule"/>
</dbReference>
<dbReference type="Gene3D" id="4.10.830.30">
    <property type="entry name" value="Ribosomal protein L31"/>
    <property type="match status" value="1"/>
</dbReference>
<dbReference type="HAMAP" id="MF_00502">
    <property type="entry name" value="Ribosomal_bL31_2"/>
    <property type="match status" value="1"/>
</dbReference>
<dbReference type="InterPro" id="IPR034704">
    <property type="entry name" value="Ribosomal_bL28/bL31-like_sf"/>
</dbReference>
<dbReference type="InterPro" id="IPR002150">
    <property type="entry name" value="Ribosomal_bL31"/>
</dbReference>
<dbReference type="InterPro" id="IPR027493">
    <property type="entry name" value="Ribosomal_bL31_B"/>
</dbReference>
<dbReference type="InterPro" id="IPR042105">
    <property type="entry name" value="Ribosomal_bL31_sf"/>
</dbReference>
<dbReference type="NCBIfam" id="TIGR00105">
    <property type="entry name" value="L31"/>
    <property type="match status" value="1"/>
</dbReference>
<dbReference type="NCBIfam" id="NF002462">
    <property type="entry name" value="PRK01678.1"/>
    <property type="match status" value="1"/>
</dbReference>
<dbReference type="PANTHER" id="PTHR33280">
    <property type="entry name" value="50S RIBOSOMAL PROTEIN L31, CHLOROPLASTIC"/>
    <property type="match status" value="1"/>
</dbReference>
<dbReference type="PANTHER" id="PTHR33280:SF1">
    <property type="entry name" value="LARGE RIBOSOMAL SUBUNIT PROTEIN BL31C"/>
    <property type="match status" value="1"/>
</dbReference>
<dbReference type="Pfam" id="PF01197">
    <property type="entry name" value="Ribosomal_L31"/>
    <property type="match status" value="1"/>
</dbReference>
<dbReference type="PRINTS" id="PR01249">
    <property type="entry name" value="RIBOSOMALL31"/>
</dbReference>
<dbReference type="SUPFAM" id="SSF143800">
    <property type="entry name" value="L28p-like"/>
    <property type="match status" value="1"/>
</dbReference>
<dbReference type="PROSITE" id="PS01143">
    <property type="entry name" value="RIBOSOMAL_L31"/>
    <property type="match status" value="1"/>
</dbReference>
<protein>
    <recommendedName>
        <fullName evidence="1">Large ribosomal subunit protein bL31B</fullName>
    </recommendedName>
    <alternativeName>
        <fullName evidence="2">50S ribosomal protein L31 type B</fullName>
    </alternativeName>
</protein>
<reference key="1">
    <citation type="journal article" date="2003" name="Science">
        <title>A genomic view of the human-Bacteroides thetaiotaomicron symbiosis.</title>
        <authorList>
            <person name="Xu J."/>
            <person name="Bjursell M.K."/>
            <person name="Himrod J."/>
            <person name="Deng S."/>
            <person name="Carmichael L.K."/>
            <person name="Chiang H.C."/>
            <person name="Hooper L.V."/>
            <person name="Gordon J.I."/>
        </authorList>
    </citation>
    <scope>NUCLEOTIDE SEQUENCE [LARGE SCALE GENOMIC DNA]</scope>
    <source>
        <strain>ATCC 29148 / DSM 2079 / JCM 5827 / CCUG 10774 / NCTC 10582 / VPI-5482 / E50</strain>
    </source>
</reference>
<proteinExistence type="inferred from homology"/>
<organism>
    <name type="scientific">Bacteroides thetaiotaomicron (strain ATCC 29148 / DSM 2079 / JCM 5827 / CCUG 10774 / NCTC 10582 / VPI-5482 / E50)</name>
    <dbReference type="NCBI Taxonomy" id="226186"/>
    <lineage>
        <taxon>Bacteria</taxon>
        <taxon>Pseudomonadati</taxon>
        <taxon>Bacteroidota</taxon>
        <taxon>Bacteroidia</taxon>
        <taxon>Bacteroidales</taxon>
        <taxon>Bacteroidaceae</taxon>
        <taxon>Bacteroides</taxon>
    </lineage>
</organism>
<comment type="subunit">
    <text evidence="1">Part of the 50S ribosomal subunit.</text>
</comment>
<comment type="similarity">
    <text evidence="1">Belongs to the bacterial ribosomal protein bL31 family. Type B subfamily.</text>
</comment>
<sequence length="84" mass="9598">MKKGLHPESYRPVVFKDMSNGDMFLSKSTVATKETIEFEGETYPLLKIEISNTSHPFYTGKSTLVDTAGRVDKFMSRYGDRKKK</sequence>
<feature type="chain" id="PRO_0000173205" description="Large ribosomal subunit protein bL31B">
    <location>
        <begin position="1"/>
        <end position="84"/>
    </location>
</feature>
<keyword id="KW-1185">Reference proteome</keyword>
<keyword id="KW-0687">Ribonucleoprotein</keyword>
<keyword id="KW-0689">Ribosomal protein</keyword>
<name>RL31B_BACTN</name>
<evidence type="ECO:0000255" key="1">
    <source>
        <dbReference type="HAMAP-Rule" id="MF_00502"/>
    </source>
</evidence>
<evidence type="ECO:0000305" key="2"/>
<accession>Q8A733</accession>